<name>OE64C_ARATH</name>
<feature type="chain" id="PRO_0000414022" description="Outer envelope protein 64, chloroplastic">
    <location>
        <begin position="1"/>
        <end position="589"/>
    </location>
</feature>
<feature type="topological domain" description="Chloroplast intermembrane" evidence="1">
    <location>
        <position position="1"/>
    </location>
</feature>
<feature type="transmembrane region" description="Helical" evidence="2">
    <location>
        <begin position="2"/>
        <end position="22"/>
    </location>
</feature>
<feature type="topological domain" description="Cytoplasmic" evidence="1">
    <location>
        <begin position="23"/>
        <end position="141"/>
    </location>
</feature>
<feature type="transmembrane region" description="Helical" evidence="2">
    <location>
        <begin position="142"/>
        <end position="162"/>
    </location>
</feature>
<feature type="topological domain" description="Chloroplast intermembrane" evidence="1">
    <location>
        <begin position="163"/>
        <end position="398"/>
    </location>
</feature>
<feature type="transmembrane region" description="Helical" evidence="2">
    <location>
        <begin position="399"/>
        <end position="419"/>
    </location>
</feature>
<feature type="topological domain" description="Cytoplasmic" evidence="1">
    <location>
        <begin position="420"/>
        <end position="589"/>
    </location>
</feature>
<feature type="repeat" description="TPR 1">
    <location>
        <begin position="474"/>
        <end position="507"/>
    </location>
</feature>
<feature type="repeat" description="TPR 2">
    <location>
        <begin position="508"/>
        <end position="541"/>
    </location>
</feature>
<feature type="repeat" description="TPR 3">
    <location>
        <begin position="542"/>
        <end position="575"/>
    </location>
</feature>
<sequence length="589" mass="64025">MASQAANLWVLLGLGLAGILMLTKKLKKTVREDFGAFIDKLMLLPPPQPAPPKAPHPLTGLTFAVSDVFDITGYVTGFGHPDWVRTHEAASSTSPVVSTLVEGGATCVGKTVVDEFAFSISGENKHYDSPTNPAAPTRIPGGACSGAAVAVATNAVDFALGIDTVGGVRVPAGYCGVLGFKSSYGAISNTGIIPVSSSLDSVGWFARDPNTLRRVGHVLLQLPFATQRNPRQIILADDCFQLLKIPVDRITQVVTKSAEKLFGRQLLKHQNLETYFETKVPSLKEFARTKAIANTKVSTSRLLANVMQLLQRHEFLQNHGDWINTVKPAIDPVILSQVCENPELTNEETENLNAIRNETRVAIGSLLKDDGILVIPTLPAVPPKLGSKEITSEDYQNRASSLLSIASISGCCQVTVPLGHHEKCPISVSFIGRHGGDRFLLDTVQTMYPSLQEYSSIVTDPKSSKKAITKEESAEIAKEKGNQAFKEKLWQKAIGLYSEAIKLSDNNATYYSNRAAAYLELGGFLQAEEDCTKAITLDKKNVKAYLRRGTAREMLGDCKGAIEDFRYALVLEPNNKRASLSAERLRKFQ</sequence>
<proteinExistence type="evidence at protein level"/>
<protein>
    <recommendedName>
        <fullName>Outer envelope protein 64, chloroplastic</fullName>
    </recommendedName>
    <alternativeName>
        <fullName>Translocon at the outer membrane of chloroplasts 64-III</fullName>
    </alternativeName>
</protein>
<keyword id="KW-0150">Chloroplast</keyword>
<keyword id="KW-0472">Membrane</keyword>
<keyword id="KW-0934">Plastid</keyword>
<keyword id="KW-1002">Plastid outer membrane</keyword>
<keyword id="KW-0653">Protein transport</keyword>
<keyword id="KW-1185">Reference proteome</keyword>
<keyword id="KW-0677">Repeat</keyword>
<keyword id="KW-0802">TPR repeat</keyword>
<keyword id="KW-0812">Transmembrane</keyword>
<keyword id="KW-1133">Transmembrane helix</keyword>
<keyword id="KW-0813">Transport</keyword>
<evidence type="ECO:0000250" key="1"/>
<evidence type="ECO:0000255" key="2"/>
<evidence type="ECO:0000269" key="3">
    <source>
    </source>
</evidence>
<evidence type="ECO:0000269" key="4">
    <source>
    </source>
</evidence>
<evidence type="ECO:0000269" key="5">
    <source>
    </source>
</evidence>
<evidence type="ECO:0000269" key="6">
    <source>
    </source>
</evidence>
<evidence type="ECO:0000305" key="7"/>
<reference key="1">
    <citation type="journal article" date="2000" name="DNA Res.">
        <title>Structural analysis of Arabidopsis thaliana chromosome 3. I. Sequence features of the regions of 4,504,864 bp covered by sixty P1 and TAC clones.</title>
        <authorList>
            <person name="Sato S."/>
            <person name="Nakamura Y."/>
            <person name="Kaneko T."/>
            <person name="Katoh T."/>
            <person name="Asamizu E."/>
            <person name="Tabata S."/>
        </authorList>
    </citation>
    <scope>NUCLEOTIDE SEQUENCE [LARGE SCALE GENOMIC DNA]</scope>
    <source>
        <strain>cv. Columbia</strain>
    </source>
</reference>
<reference key="2">
    <citation type="journal article" date="2017" name="Plant J.">
        <title>Araport11: a complete reannotation of the Arabidopsis thaliana reference genome.</title>
        <authorList>
            <person name="Cheng C.Y."/>
            <person name="Krishnakumar V."/>
            <person name="Chan A.P."/>
            <person name="Thibaud-Nissen F."/>
            <person name="Schobel S."/>
            <person name="Town C.D."/>
        </authorList>
    </citation>
    <scope>GENOME REANNOTATION</scope>
    <source>
        <strain>cv. Columbia</strain>
    </source>
</reference>
<reference key="3">
    <citation type="journal article" date="2004" name="FEBS Lett.">
        <title>A plant outer mitochondrial membrane protein with high amino acid sequence identity to a chloroplast protein import receptor.</title>
        <authorList>
            <person name="Chew O."/>
            <person name="Lister R."/>
            <person name="Qbadou S."/>
            <person name="Heazlewood J.L."/>
            <person name="Soll J."/>
            <person name="Schleiff E."/>
            <person name="Millar A.H."/>
            <person name="Whelan J."/>
        </authorList>
    </citation>
    <scope>SUBCELLULAR LOCATION</scope>
    <scope>TISSUE SPECIFICITY</scope>
</reference>
<reference key="4">
    <citation type="journal article" date="2004" name="Mol. Cells">
        <title>The transmembrane domain of AtToc64 and its C-terminal lysine-rich flanking region are targeting signals to the chloroplast outer envelope membrane [correction].</title>
        <authorList>
            <person name="Lee Y.J."/>
            <person name="Sohn E.J."/>
            <person name="Lee K.H."/>
            <person name="Lee D.W."/>
            <person name="Hwang I."/>
        </authorList>
    </citation>
    <scope>SUBCELLULAR LOCATION</scope>
    <scope>TOPOLOGY</scope>
</reference>
<reference key="5">
    <citation type="journal article" date="2006" name="EMBO J.">
        <title>The molecular chaperone Hsp90 delivers precursor proteins to the chloroplast import receptor Toc64.</title>
        <authorList>
            <person name="Qbadou S."/>
            <person name="Becker T."/>
            <person name="Mirus O."/>
            <person name="Tews I."/>
            <person name="Soll J."/>
            <person name="Schleiff E."/>
        </authorList>
    </citation>
    <scope>FUNCTION</scope>
    <scope>DISRUPTION PHENOTYPE</scope>
</reference>
<reference key="6">
    <citation type="journal article" date="2007" name="J. Mol. Biol.">
        <title>Toc64--a preprotein-receptor at the outer membrane with bipartide function.</title>
        <authorList>
            <person name="Qbadou S."/>
            <person name="Becker T."/>
            <person name="Bionda T."/>
            <person name="Reger K."/>
            <person name="Ruprecht M."/>
            <person name="Soll J."/>
            <person name="Schleiff E."/>
        </authorList>
    </citation>
    <scope>FUNCTION</scope>
    <scope>TOPOLOGY</scope>
</reference>
<reference key="7">
    <citation type="journal article" date="2007" name="Plant J.">
        <title>Toc64/OEP64 is not essential for the efficient import of proteins into chloroplasts in Arabidopsis thaliana.</title>
        <authorList>
            <person name="Aronsson H."/>
            <person name="Boij P."/>
            <person name="Patel R."/>
            <person name="Wardle A."/>
            <person name="Toepel M."/>
            <person name="Jarvis P."/>
        </authorList>
    </citation>
    <scope>FUNCTION</scope>
    <scope>TISSUE SPECIFICITY</scope>
    <scope>DISRUPTION PHENOTYPE</scope>
</reference>
<reference key="8">
    <citation type="journal article" date="2010" name="PLoS ONE">
        <title>In silico identification of carboxylate clamp type tetratricopeptide repeat proteins in Arabidopsis and rice as putative co-chaperones of Hsp90/Hsp70.</title>
        <authorList>
            <person name="Prasad B.D."/>
            <person name="Goel S."/>
            <person name="Krishna P."/>
        </authorList>
    </citation>
    <scope>IDENTIFICATION</scope>
</reference>
<comment type="function">
    <text evidence="4 5 6">Chaperone receptor mediating Hsp90-dependent protein targeting to chloroplasts. Bi-functional preprotein receptor acting on both sides of the membrane. Not essential for an efficient import of pre-proteins into plastids.</text>
</comment>
<comment type="subunit">
    <text evidence="1">Part of the Toc complex and of the intermembrane space complex.</text>
</comment>
<comment type="subcellular location">
    <subcellularLocation>
        <location evidence="7">Plastid</location>
        <location evidence="7">Chloroplast outer membrane</location>
        <topology evidence="7">Multi-pass membrane protein</topology>
    </subcellularLocation>
</comment>
<comment type="tissue specificity">
    <text evidence="3 6">Expressed in roots, cotyledons, leaves and flower buds.</text>
</comment>
<comment type="domain">
    <text>The transmembrane domain and its C-terminal lysine-rich flanking region (LFR) (26-61) are both necessary and sufficient for targeting to the outer envelope membrane.</text>
</comment>
<comment type="disruption phenotype">
    <text evidence="4 6">No visible phenotype.</text>
</comment>
<gene>
    <name type="primary">OEP64</name>
    <name type="synonym">TOC64-III</name>
    <name type="ordered locus">At3g17970</name>
    <name type="ORF">MEB5.19</name>
</gene>
<dbReference type="EMBL" id="AB019230">
    <property type="protein sequence ID" value="BAB02718.1"/>
    <property type="molecule type" value="Genomic_DNA"/>
</dbReference>
<dbReference type="EMBL" id="CP002686">
    <property type="protein sequence ID" value="AEE76030.1"/>
    <property type="molecule type" value="Genomic_DNA"/>
</dbReference>
<dbReference type="RefSeq" id="NP_188424.2">
    <property type="nucleotide sequence ID" value="NM_112678.4"/>
</dbReference>
<dbReference type="SMR" id="Q9LVH5"/>
<dbReference type="BioGRID" id="4995">
    <property type="interactions" value="5"/>
</dbReference>
<dbReference type="FunCoup" id="Q9LVH5">
    <property type="interactions" value="393"/>
</dbReference>
<dbReference type="IntAct" id="Q9LVH5">
    <property type="interactions" value="1"/>
</dbReference>
<dbReference type="STRING" id="3702.Q9LVH5"/>
<dbReference type="SwissPalm" id="Q9LVH5"/>
<dbReference type="PaxDb" id="3702-AT3G17970.1"/>
<dbReference type="ProteomicsDB" id="238920"/>
<dbReference type="EnsemblPlants" id="AT3G17970.1">
    <property type="protein sequence ID" value="AT3G17970.1"/>
    <property type="gene ID" value="AT3G17970"/>
</dbReference>
<dbReference type="GeneID" id="819660"/>
<dbReference type="Gramene" id="AT3G17970.1">
    <property type="protein sequence ID" value="AT3G17970.1"/>
    <property type="gene ID" value="AT3G17970"/>
</dbReference>
<dbReference type="KEGG" id="ath:AT3G17970"/>
<dbReference type="Araport" id="AT3G17970"/>
<dbReference type="TAIR" id="AT3G17970">
    <property type="gene designation" value="TOC64-III"/>
</dbReference>
<dbReference type="eggNOG" id="KOG1124">
    <property type="taxonomic scope" value="Eukaryota"/>
</dbReference>
<dbReference type="eggNOG" id="KOG1211">
    <property type="taxonomic scope" value="Eukaryota"/>
</dbReference>
<dbReference type="HOGENOM" id="CLU_009600_17_1_1"/>
<dbReference type="InParanoid" id="Q9LVH5"/>
<dbReference type="OrthoDB" id="245563at2759"/>
<dbReference type="PhylomeDB" id="Q9LVH5"/>
<dbReference type="BioCyc" id="ARA:AT3G17970-MONOMER"/>
<dbReference type="PRO" id="PR:Q9LVH5"/>
<dbReference type="Proteomes" id="UP000006548">
    <property type="component" value="Chromosome 3"/>
</dbReference>
<dbReference type="ExpressionAtlas" id="Q9LVH5">
    <property type="expression patterns" value="baseline and differential"/>
</dbReference>
<dbReference type="GO" id="GO:0009507">
    <property type="term" value="C:chloroplast"/>
    <property type="evidence" value="ECO:0007005"/>
    <property type="project" value="TAIR"/>
</dbReference>
<dbReference type="GO" id="GO:0009941">
    <property type="term" value="C:chloroplast envelope"/>
    <property type="evidence" value="ECO:0007005"/>
    <property type="project" value="TAIR"/>
</dbReference>
<dbReference type="GO" id="GO:0009707">
    <property type="term" value="C:chloroplast outer membrane"/>
    <property type="evidence" value="ECO:0007669"/>
    <property type="project" value="UniProtKB-SubCell"/>
</dbReference>
<dbReference type="GO" id="GO:0005829">
    <property type="term" value="C:cytosol"/>
    <property type="evidence" value="ECO:0007005"/>
    <property type="project" value="TAIR"/>
</dbReference>
<dbReference type="GO" id="GO:0009536">
    <property type="term" value="C:plastid"/>
    <property type="evidence" value="ECO:0007005"/>
    <property type="project" value="TAIR"/>
</dbReference>
<dbReference type="GO" id="GO:0015031">
    <property type="term" value="P:protein transport"/>
    <property type="evidence" value="ECO:0007669"/>
    <property type="project" value="UniProtKB-KW"/>
</dbReference>
<dbReference type="FunFam" id="3.90.1300.10:FF:000004">
    <property type="entry name" value="Outer envelope protein 64, mitochondrial"/>
    <property type="match status" value="1"/>
</dbReference>
<dbReference type="Gene3D" id="3.90.1300.10">
    <property type="entry name" value="Amidase signature (AS) domain"/>
    <property type="match status" value="1"/>
</dbReference>
<dbReference type="Gene3D" id="1.25.40.10">
    <property type="entry name" value="Tetratricopeptide repeat domain"/>
    <property type="match status" value="1"/>
</dbReference>
<dbReference type="InterPro" id="IPR023631">
    <property type="entry name" value="Amidase_dom"/>
</dbReference>
<dbReference type="InterPro" id="IPR036928">
    <property type="entry name" value="AS_sf"/>
</dbReference>
<dbReference type="InterPro" id="IPR011990">
    <property type="entry name" value="TPR-like_helical_dom_sf"/>
</dbReference>
<dbReference type="InterPro" id="IPR019734">
    <property type="entry name" value="TPR_rpt"/>
</dbReference>
<dbReference type="PANTHER" id="PTHR46310">
    <property type="entry name" value="AMIDASE 1"/>
    <property type="match status" value="1"/>
</dbReference>
<dbReference type="PANTHER" id="PTHR46310:SF5">
    <property type="entry name" value="OUTER ENVELOPE PROTEIN 64, CHLOROPLASTIC"/>
    <property type="match status" value="1"/>
</dbReference>
<dbReference type="Pfam" id="PF01425">
    <property type="entry name" value="Amidase"/>
    <property type="match status" value="1"/>
</dbReference>
<dbReference type="SMART" id="SM00028">
    <property type="entry name" value="TPR"/>
    <property type="match status" value="3"/>
</dbReference>
<dbReference type="SUPFAM" id="SSF75304">
    <property type="entry name" value="Amidase signature (AS) enzymes"/>
    <property type="match status" value="1"/>
</dbReference>
<dbReference type="SUPFAM" id="SSF48452">
    <property type="entry name" value="TPR-like"/>
    <property type="match status" value="1"/>
</dbReference>
<dbReference type="PROSITE" id="PS50005">
    <property type="entry name" value="TPR"/>
    <property type="match status" value="3"/>
</dbReference>
<dbReference type="PROSITE" id="PS50293">
    <property type="entry name" value="TPR_REGION"/>
    <property type="match status" value="1"/>
</dbReference>
<accession>Q9LVH5</accession>
<organism>
    <name type="scientific">Arabidopsis thaliana</name>
    <name type="common">Mouse-ear cress</name>
    <dbReference type="NCBI Taxonomy" id="3702"/>
    <lineage>
        <taxon>Eukaryota</taxon>
        <taxon>Viridiplantae</taxon>
        <taxon>Streptophyta</taxon>
        <taxon>Embryophyta</taxon>
        <taxon>Tracheophyta</taxon>
        <taxon>Spermatophyta</taxon>
        <taxon>Magnoliopsida</taxon>
        <taxon>eudicotyledons</taxon>
        <taxon>Gunneridae</taxon>
        <taxon>Pentapetalae</taxon>
        <taxon>rosids</taxon>
        <taxon>malvids</taxon>
        <taxon>Brassicales</taxon>
        <taxon>Brassicaceae</taxon>
        <taxon>Camelineae</taxon>
        <taxon>Arabidopsis</taxon>
    </lineage>
</organism>